<feature type="chain" id="PRO_0000116145" description="Virion protein US10">
    <location>
        <begin position="1"/>
        <end position="312"/>
    </location>
</feature>
<feature type="zinc finger region" evidence="2">
    <location>
        <begin position="271"/>
        <end position="283"/>
    </location>
</feature>
<feature type="region of interest" description="Disordered" evidence="3">
    <location>
        <begin position="20"/>
        <end position="106"/>
    </location>
</feature>
<feature type="region of interest" description="Disordered" evidence="3">
    <location>
        <begin position="143"/>
        <end position="170"/>
    </location>
</feature>
<feature type="compositionally biased region" description="Basic and acidic residues" evidence="3">
    <location>
        <begin position="46"/>
        <end position="62"/>
    </location>
</feature>
<protein>
    <recommendedName>
        <fullName>Virion protein US10</fullName>
    </recommendedName>
</protein>
<accession>P06486</accession>
<dbReference type="EMBL" id="X02138">
    <property type="protein sequence ID" value="CAA26064.2"/>
    <property type="molecule type" value="Genomic_DNA"/>
</dbReference>
<dbReference type="EMBL" id="X00428">
    <property type="protein sequence ID" value="CAA25126.1"/>
    <property type="molecule type" value="Genomic_RNA"/>
</dbReference>
<dbReference type="EMBL" id="L00036">
    <property type="protein sequence ID" value="AAA96678.1"/>
    <property type="molecule type" value="Genomic_DNA"/>
</dbReference>
<dbReference type="EMBL" id="X14112">
    <property type="protein sequence ID" value="CAA32275.1"/>
    <property type="molecule type" value="Genomic_DNA"/>
</dbReference>
<dbReference type="PIR" id="A05242">
    <property type="entry name" value="QQBE07"/>
</dbReference>
<dbReference type="RefSeq" id="YP_009137146.1">
    <property type="nucleotide sequence ID" value="NC_001806.2"/>
</dbReference>
<dbReference type="DNASU" id="2703436"/>
<dbReference type="GeneID" id="2703436"/>
<dbReference type="KEGG" id="vg:2703436"/>
<dbReference type="Proteomes" id="UP000009294">
    <property type="component" value="Segment"/>
</dbReference>
<dbReference type="GO" id="GO:0044204">
    <property type="term" value="C:host cell nuclear matrix"/>
    <property type="evidence" value="ECO:0007669"/>
    <property type="project" value="UniProtKB-SubCell"/>
</dbReference>
<dbReference type="GO" id="GO:0019033">
    <property type="term" value="C:viral tegument"/>
    <property type="evidence" value="ECO:0007669"/>
    <property type="project" value="UniProtKB-SubCell"/>
</dbReference>
<dbReference type="GO" id="GO:0008270">
    <property type="term" value="F:zinc ion binding"/>
    <property type="evidence" value="ECO:0007669"/>
    <property type="project" value="UniProtKB-KW"/>
</dbReference>
<dbReference type="InterPro" id="IPR000714">
    <property type="entry name" value="EHV_Unk"/>
</dbReference>
<dbReference type="Pfam" id="PF02053">
    <property type="entry name" value="Gene66"/>
    <property type="match status" value="1"/>
</dbReference>
<dbReference type="PRINTS" id="PR00957">
    <property type="entry name" value="GENE66"/>
</dbReference>
<name>US10_HHV11</name>
<gene>
    <name type="primary">US10</name>
</gene>
<keyword id="KW-1048">Host nucleus</keyword>
<keyword id="KW-0479">Metal-binding</keyword>
<keyword id="KW-0597">Phosphoprotein</keyword>
<keyword id="KW-1185">Reference proteome</keyword>
<keyword id="KW-0946">Virion</keyword>
<keyword id="KW-0920">Virion tegument</keyword>
<keyword id="KW-0862">Zinc</keyword>
<keyword id="KW-0863">Zinc-finger</keyword>
<organism>
    <name type="scientific">Human herpesvirus 1 (strain 17)</name>
    <name type="common">HHV-1</name>
    <name type="synonym">Human herpes simplex virus 1</name>
    <dbReference type="NCBI Taxonomy" id="10299"/>
    <lineage>
        <taxon>Viruses</taxon>
        <taxon>Duplodnaviria</taxon>
        <taxon>Heunggongvirae</taxon>
        <taxon>Peploviricota</taxon>
        <taxon>Herviviricetes</taxon>
        <taxon>Herpesvirales</taxon>
        <taxon>Orthoherpesviridae</taxon>
        <taxon>Alphaherpesvirinae</taxon>
        <taxon>Simplexvirus</taxon>
        <taxon>Simplexvirus humanalpha1</taxon>
        <taxon>Human herpesvirus 1</taxon>
    </lineage>
</organism>
<sequence length="312" mass="34056">MIKRRGNVEIRVYYESVRTLRSRSHLKPSDRQQSPGHRVFPGSPGFRDHPENLGNPEYRELPETPGYRVTPGIHDNPGLPGSPGLPGSPGLPGSPGPHAPPANHVRLAGLYSPGKYAPLASPDPFSPQHGAYARARVGIHTAVRVPPTGSPTHTHLRQDPGDEPTSDDSGLYPLDARALAHLVMLPADHRAFFRTVVEVSRMCAANVRDPPPPATGAMLGRHARLVHTQWLRANQETSPLWPWRTAAINFITTMAPRVQTHRHMHDLLMACAFWCCLTHASTCSYAGLYSTHCLHLFGAFGCGDPALTPPLC</sequence>
<evidence type="ECO:0000250" key="1"/>
<evidence type="ECO:0000255" key="2"/>
<evidence type="ECO:0000256" key="3">
    <source>
        <dbReference type="SAM" id="MobiDB-lite"/>
    </source>
</evidence>
<evidence type="ECO:0000269" key="4">
    <source>
    </source>
</evidence>
<evidence type="ECO:0000305" key="5"/>
<proteinExistence type="evidence at protein level"/>
<reference key="1">
    <citation type="journal article" date="1985" name="J. Mol. Biol.">
        <title>Sequence determination and genetic content of the short unique region in the genome of herpes simplex virus type 1.</title>
        <authorList>
            <person name="McGeoch D.J."/>
            <person name="Dolan A."/>
            <person name="Donald S."/>
            <person name="Rixon F.J."/>
        </authorList>
    </citation>
    <scope>NUCLEOTIDE SEQUENCE</scope>
</reference>
<reference key="2">
    <citation type="journal article" date="1984" name="Nucleic Acids Res.">
        <title>A 3' co-terminal family of mRNAs from the herpes simplex virus type 1 short region: two overlapping reading frames encode unrelated polypeptide one of which has highly reiterated amino acid sequence.</title>
        <authorList>
            <person name="Rixon F.J."/>
            <person name="McGeoch D.J."/>
        </authorList>
    </citation>
    <scope>NUCLEOTIDE SEQUENCE</scope>
</reference>
<reference key="3">
    <citation type="journal article" date="1988" name="J. Gen. Virol.">
        <title>The complete DNA sequence of the long unique region in the genome of herpes simplex virus type 1.</title>
        <authorList>
            <person name="McGeoch D.J."/>
            <person name="Dalrymple M.A."/>
            <person name="Davison A.J."/>
            <person name="Dolan A."/>
            <person name="Frame M.C."/>
            <person name="McNab D."/>
            <person name="Perry L.J."/>
            <person name="Scott J.E."/>
            <person name="Taylor P."/>
        </authorList>
    </citation>
    <scope>NUCLEOTIDE SEQUENCE</scope>
</reference>
<reference key="4">
    <citation type="journal article" date="1997" name="J. Gen. Virol.">
        <title>The product of the US10 gene of herpes simplex virus type 1 is a capsid/tegument-associated phosphoprotein which copurifies with the nuclear matrix.</title>
        <authorList>
            <person name="Yamada H."/>
            <person name="Daikoku T."/>
            <person name="Yamashita Y."/>
            <person name="Jiang Y.M."/>
            <person name="Tsurumi T."/>
            <person name="Nishiyama Y."/>
        </authorList>
    </citation>
    <scope>PHOSPHORYLATION</scope>
    <scope>SUBCELLULAR LOCATION</scope>
    <source>
        <strain>KOS</strain>
    </source>
</reference>
<comment type="subcellular location">
    <subcellularLocation>
        <location evidence="1">Virion tegument</location>
    </subcellularLocation>
    <subcellularLocation>
        <location evidence="4">Host nucleus matrix</location>
    </subcellularLocation>
</comment>
<comment type="induction">
    <text>Expressed late in the infection cycle.</text>
</comment>
<comment type="PTM">
    <text evidence="4">Phosphorylated.</text>
</comment>
<comment type="similarity">
    <text evidence="5">Belongs to the herpesviridae US10 family.</text>
</comment>
<organismHost>
    <name type="scientific">Homo sapiens</name>
    <name type="common">Human</name>
    <dbReference type="NCBI Taxonomy" id="9606"/>
</organismHost>